<sequence length="749" mass="82624">MIKLILSLIFLIICCNINPSESFKLITLTTGPTSDLGFNNMVNQGRIGVSKAMNIEDSRIFIVSGRNETYALLLPLIQNDDIDLVICSSQDHGDACKEIAAMYIDSPTIKTQFLVRGSGAATKNLIQITYNYASVNYISGMFAGLQTVKNKIGFLSPGSAANNNDSFVYAFWIGAKQVNPDVKFYYYNIGSYLDQDKTIAATQDLINIYGCDVIADTLDDFSAGNVAIQNNQYAMGTNGFPQRDVYGENVIFSYAYNWTKYFLPIAGSVANGTVPGKWYADFNKEDNYNFYDLSFGFKVSQNTKDLLIQKSRVLATTPRAGHPYYCNEYIEQYTKKYNLPTQAANSSCISTAGFFYINQPVGDMIYLGSYNIRLSKIEFSSSVQKGFSIVSGCLIAFVILMMVGIVYYKDTPSIRSASPIFLNFSLIGGIIIYIGIIIWVGPISTHQCNARFWLVTLGFSTLIGSLVVKNFRIWLIFDNPELKAIKITNYQLFPWVGLCLVINIVLMAILTSVGDLKAIEAQGIDSLGKYEYMTVCKMNSAGASTLYSILAYFAALLLVGVFVSWKIRIVDIEEFNESKAIANTLYAVSFCLFVIVPLMISPQEKQSETIILCVAGLFITTAALLIVFIPKFWRVFIYGKEGTNEMFKQKKSSSVATARAESLSKNSSNGGAHSGGGAVKTNRRGNIVSGDFTDDSESSLSEPNKPTKNNDGNVNVTAGAVLAEFTDDTISEFDENEVNEEPVKTESQE</sequence>
<feature type="signal peptide" evidence="1">
    <location>
        <begin position="1"/>
        <end position="22"/>
    </location>
</feature>
<feature type="chain" id="PRO_0000370356" description="Metabotropic glutamate receptor-like protein M">
    <location>
        <begin position="23"/>
        <end position="749"/>
    </location>
</feature>
<feature type="topological domain" description="Extracellular" evidence="1">
    <location>
        <begin position="23"/>
        <end position="385"/>
    </location>
</feature>
<feature type="transmembrane region" description="Helical; Name=1" evidence="1">
    <location>
        <begin position="386"/>
        <end position="406"/>
    </location>
</feature>
<feature type="topological domain" description="Cytoplasmic" evidence="1">
    <location>
        <begin position="407"/>
        <end position="419"/>
    </location>
</feature>
<feature type="transmembrane region" description="Helical; Name=2" evidence="1">
    <location>
        <begin position="420"/>
        <end position="440"/>
    </location>
</feature>
<feature type="topological domain" description="Extracellular" evidence="1">
    <location>
        <begin position="441"/>
        <end position="456"/>
    </location>
</feature>
<feature type="transmembrane region" description="Helical; Name=3" evidence="1">
    <location>
        <begin position="457"/>
        <end position="477"/>
    </location>
</feature>
<feature type="topological domain" description="Cytoplasmic" evidence="1">
    <location>
        <begin position="478"/>
        <end position="492"/>
    </location>
</feature>
<feature type="transmembrane region" description="Helical; Name=4" evidence="1">
    <location>
        <begin position="493"/>
        <end position="513"/>
    </location>
</feature>
<feature type="topological domain" description="Extracellular" evidence="1">
    <location>
        <begin position="514"/>
        <end position="544"/>
    </location>
</feature>
<feature type="transmembrane region" description="Helical; Name=5" evidence="1">
    <location>
        <begin position="545"/>
        <end position="565"/>
    </location>
</feature>
<feature type="topological domain" description="Cytoplasmic" evidence="1">
    <location>
        <begin position="566"/>
        <end position="579"/>
    </location>
</feature>
<feature type="transmembrane region" description="Helical; Name=6" evidence="1">
    <location>
        <begin position="580"/>
        <end position="600"/>
    </location>
</feature>
<feature type="topological domain" description="Extracellular" evidence="1">
    <location>
        <begin position="601"/>
        <end position="609"/>
    </location>
</feature>
<feature type="transmembrane region" description="Helical; Name=7" evidence="1">
    <location>
        <begin position="610"/>
        <end position="630"/>
    </location>
</feature>
<feature type="topological domain" description="Cytoplasmic" evidence="1">
    <location>
        <begin position="631"/>
        <end position="749"/>
    </location>
</feature>
<feature type="region of interest" description="Disordered" evidence="2">
    <location>
        <begin position="658"/>
        <end position="749"/>
    </location>
</feature>
<feature type="compositionally biased region" description="Polar residues" evidence="2">
    <location>
        <begin position="698"/>
        <end position="716"/>
    </location>
</feature>
<feature type="compositionally biased region" description="Acidic residues" evidence="2">
    <location>
        <begin position="725"/>
        <end position="740"/>
    </location>
</feature>
<feature type="glycosylation site" description="N-linked (GlcNAc...) asparagine" evidence="1">
    <location>
        <position position="67"/>
    </location>
</feature>
<feature type="glycosylation site" description="N-linked (GlcNAc...) asparagine" evidence="1">
    <location>
        <position position="164"/>
    </location>
</feature>
<feature type="glycosylation site" description="N-linked (GlcNAc...) asparagine" evidence="1">
    <location>
        <position position="257"/>
    </location>
</feature>
<feature type="glycosylation site" description="N-linked (GlcNAc...) asparagine" evidence="1">
    <location>
        <position position="271"/>
    </location>
</feature>
<feature type="glycosylation site" description="N-linked (GlcNAc...) asparagine" evidence="1">
    <location>
        <position position="345"/>
    </location>
</feature>
<organism>
    <name type="scientific">Dictyostelium discoideum</name>
    <name type="common">Social amoeba</name>
    <dbReference type="NCBI Taxonomy" id="44689"/>
    <lineage>
        <taxon>Eukaryota</taxon>
        <taxon>Amoebozoa</taxon>
        <taxon>Evosea</taxon>
        <taxon>Eumycetozoa</taxon>
        <taxon>Dictyostelia</taxon>
        <taxon>Dictyosteliales</taxon>
        <taxon>Dictyosteliaceae</taxon>
        <taxon>Dictyostelium</taxon>
    </lineage>
</organism>
<proteinExistence type="evidence at transcript level"/>
<accession>Q54LG8</accession>
<protein>
    <recommendedName>
        <fullName>Metabotropic glutamate receptor-like protein M</fullName>
    </recommendedName>
</protein>
<keyword id="KW-0297">G-protein coupled receptor</keyword>
<keyword id="KW-0325">Glycoprotein</keyword>
<keyword id="KW-0472">Membrane</keyword>
<keyword id="KW-0675">Receptor</keyword>
<keyword id="KW-1185">Reference proteome</keyword>
<keyword id="KW-0732">Signal</keyword>
<keyword id="KW-0807">Transducer</keyword>
<keyword id="KW-0812">Transmembrane</keyword>
<keyword id="KW-1133">Transmembrane helix</keyword>
<gene>
    <name type="primary">grlM</name>
    <name type="ORF">DDB_G0286643</name>
</gene>
<evidence type="ECO:0000255" key="1"/>
<evidence type="ECO:0000256" key="2">
    <source>
        <dbReference type="SAM" id="MobiDB-lite"/>
    </source>
</evidence>
<evidence type="ECO:0000269" key="3">
    <source>
    </source>
</evidence>
<evidence type="ECO:0000305" key="4"/>
<reference key="1">
    <citation type="journal article" date="2005" name="Nature">
        <title>The genome of the social amoeba Dictyostelium discoideum.</title>
        <authorList>
            <person name="Eichinger L."/>
            <person name="Pachebat J.A."/>
            <person name="Gloeckner G."/>
            <person name="Rajandream M.A."/>
            <person name="Sucgang R."/>
            <person name="Berriman M."/>
            <person name="Song J."/>
            <person name="Olsen R."/>
            <person name="Szafranski K."/>
            <person name="Xu Q."/>
            <person name="Tunggal B."/>
            <person name="Kummerfeld S."/>
            <person name="Madera M."/>
            <person name="Konfortov B.A."/>
            <person name="Rivero F."/>
            <person name="Bankier A.T."/>
            <person name="Lehmann R."/>
            <person name="Hamlin N."/>
            <person name="Davies R."/>
            <person name="Gaudet P."/>
            <person name="Fey P."/>
            <person name="Pilcher K."/>
            <person name="Chen G."/>
            <person name="Saunders D."/>
            <person name="Sodergren E.J."/>
            <person name="Davis P."/>
            <person name="Kerhornou A."/>
            <person name="Nie X."/>
            <person name="Hall N."/>
            <person name="Anjard C."/>
            <person name="Hemphill L."/>
            <person name="Bason N."/>
            <person name="Farbrother P."/>
            <person name="Desany B."/>
            <person name="Just E."/>
            <person name="Morio T."/>
            <person name="Rost R."/>
            <person name="Churcher C.M."/>
            <person name="Cooper J."/>
            <person name="Haydock S."/>
            <person name="van Driessche N."/>
            <person name="Cronin A."/>
            <person name="Goodhead I."/>
            <person name="Muzny D.M."/>
            <person name="Mourier T."/>
            <person name="Pain A."/>
            <person name="Lu M."/>
            <person name="Harper D."/>
            <person name="Lindsay R."/>
            <person name="Hauser H."/>
            <person name="James K.D."/>
            <person name="Quiles M."/>
            <person name="Madan Babu M."/>
            <person name="Saito T."/>
            <person name="Buchrieser C."/>
            <person name="Wardroper A."/>
            <person name="Felder M."/>
            <person name="Thangavelu M."/>
            <person name="Johnson D."/>
            <person name="Knights A."/>
            <person name="Loulseged H."/>
            <person name="Mungall K.L."/>
            <person name="Oliver K."/>
            <person name="Price C."/>
            <person name="Quail M.A."/>
            <person name="Urushihara H."/>
            <person name="Hernandez J."/>
            <person name="Rabbinowitsch E."/>
            <person name="Steffen D."/>
            <person name="Sanders M."/>
            <person name="Ma J."/>
            <person name="Kohara Y."/>
            <person name="Sharp S."/>
            <person name="Simmonds M.N."/>
            <person name="Spiegler S."/>
            <person name="Tivey A."/>
            <person name="Sugano S."/>
            <person name="White B."/>
            <person name="Walker D."/>
            <person name="Woodward J.R."/>
            <person name="Winckler T."/>
            <person name="Tanaka Y."/>
            <person name="Shaulsky G."/>
            <person name="Schleicher M."/>
            <person name="Weinstock G.M."/>
            <person name="Rosenthal A."/>
            <person name="Cox E.C."/>
            <person name="Chisholm R.L."/>
            <person name="Gibbs R.A."/>
            <person name="Loomis W.F."/>
            <person name="Platzer M."/>
            <person name="Kay R.R."/>
            <person name="Williams J.G."/>
            <person name="Dear P.H."/>
            <person name="Noegel A.A."/>
            <person name="Barrell B.G."/>
            <person name="Kuspa A."/>
        </authorList>
    </citation>
    <scope>NUCLEOTIDE SEQUENCE [LARGE SCALE GENOMIC DNA]</scope>
    <source>
        <strain>AX4</strain>
    </source>
</reference>
<reference key="2">
    <citation type="journal article" date="2006" name="Eur. J. Cell Biol.">
        <title>The Dictyostelium repertoire of seven transmembrane domain receptors.</title>
        <authorList>
            <person name="Prabhu Y."/>
            <person name="Eichinger L."/>
        </authorList>
    </citation>
    <scope>NOMENCLATURE</scope>
</reference>
<reference key="3">
    <citation type="journal article" date="2007" name="BMC Dev. Biol.">
        <title>GrlJ, a Dictyostelium GABAB-like receptor with roles in post-aggregation development.</title>
        <authorList>
            <person name="Prabhu Y."/>
            <person name="Mueller R."/>
            <person name="Anjard C."/>
            <person name="Noegel A.A."/>
        </authorList>
    </citation>
    <scope>DEVELOPMENTAL STAGE</scope>
</reference>
<dbReference type="EMBL" id="AAFI02000089">
    <property type="protein sequence ID" value="EAL64077.1"/>
    <property type="molecule type" value="Genomic_DNA"/>
</dbReference>
<dbReference type="RefSeq" id="XP_637593.1">
    <property type="nucleotide sequence ID" value="XM_632501.1"/>
</dbReference>
<dbReference type="SMR" id="Q54LG8"/>
<dbReference type="FunCoup" id="Q54LG8">
    <property type="interactions" value="12"/>
</dbReference>
<dbReference type="STRING" id="44689.Q54LG8"/>
<dbReference type="GlyCosmos" id="Q54LG8">
    <property type="glycosylation" value="5 sites, No reported glycans"/>
</dbReference>
<dbReference type="GlyGen" id="Q54LG8">
    <property type="glycosylation" value="6 sites"/>
</dbReference>
<dbReference type="PaxDb" id="44689-DDB0231990"/>
<dbReference type="EnsemblProtists" id="EAL64077">
    <property type="protein sequence ID" value="EAL64077"/>
    <property type="gene ID" value="DDB_G0286643"/>
</dbReference>
<dbReference type="GeneID" id="8625733"/>
<dbReference type="KEGG" id="ddi:DDB_G0286643"/>
<dbReference type="dictyBase" id="DDB_G0286643">
    <property type="gene designation" value="grlM"/>
</dbReference>
<dbReference type="VEuPathDB" id="AmoebaDB:DDB_G0286643"/>
<dbReference type="eggNOG" id="KOG1055">
    <property type="taxonomic scope" value="Eukaryota"/>
</dbReference>
<dbReference type="HOGENOM" id="CLU_365408_0_0_1"/>
<dbReference type="InParanoid" id="Q54LG8"/>
<dbReference type="OMA" id="QITYNYA"/>
<dbReference type="PhylomeDB" id="Q54LG8"/>
<dbReference type="PRO" id="PR:Q54LG8"/>
<dbReference type="Proteomes" id="UP000002195">
    <property type="component" value="Chromosome 4"/>
</dbReference>
<dbReference type="GO" id="GO:0005886">
    <property type="term" value="C:plasma membrane"/>
    <property type="evidence" value="ECO:0000318"/>
    <property type="project" value="GO_Central"/>
</dbReference>
<dbReference type="GO" id="GO:0004930">
    <property type="term" value="F:G protein-coupled receptor activity"/>
    <property type="evidence" value="ECO:0000318"/>
    <property type="project" value="GO_Central"/>
</dbReference>
<dbReference type="GO" id="GO:0007186">
    <property type="term" value="P:G protein-coupled receptor signaling pathway"/>
    <property type="evidence" value="ECO:0000318"/>
    <property type="project" value="GO_Central"/>
</dbReference>
<dbReference type="GO" id="GO:0051593">
    <property type="term" value="P:response to folic acid"/>
    <property type="evidence" value="ECO:0000314"/>
    <property type="project" value="dictyBase"/>
</dbReference>
<dbReference type="CDD" id="cd15047">
    <property type="entry name" value="7tmC_GABA-B-like"/>
    <property type="match status" value="1"/>
</dbReference>
<dbReference type="Gene3D" id="3.40.50.2300">
    <property type="match status" value="2"/>
</dbReference>
<dbReference type="InterPro" id="IPR017978">
    <property type="entry name" value="GPCR_3_C"/>
</dbReference>
<dbReference type="InterPro" id="IPR051530">
    <property type="entry name" value="mGluR/GABA-B-like"/>
</dbReference>
<dbReference type="InterPro" id="IPR003760">
    <property type="entry name" value="PnrA-like"/>
</dbReference>
<dbReference type="PANTHER" id="PTHR46924:SF3">
    <property type="entry name" value="METABOTROPIC GLUTAMATE RECEPTOR-LIKE PROTEIN C-RELATED"/>
    <property type="match status" value="1"/>
</dbReference>
<dbReference type="PANTHER" id="PTHR46924">
    <property type="entry name" value="METABOTROPIC GLUTAMATE RECEPTOR-LIKE PROTEIN C-RELATED-RELATED"/>
    <property type="match status" value="1"/>
</dbReference>
<dbReference type="Pfam" id="PF00003">
    <property type="entry name" value="7tm_3"/>
    <property type="match status" value="1"/>
</dbReference>
<dbReference type="Pfam" id="PF02608">
    <property type="entry name" value="Bmp"/>
    <property type="match status" value="1"/>
</dbReference>
<dbReference type="PRINTS" id="PR01176">
    <property type="entry name" value="GABABRECEPTR"/>
</dbReference>
<dbReference type="PROSITE" id="PS50259">
    <property type="entry name" value="G_PROTEIN_RECEP_F3_4"/>
    <property type="match status" value="1"/>
</dbReference>
<name>GRLM_DICDI</name>
<comment type="subcellular location">
    <subcellularLocation>
        <location evidence="4">Membrane</location>
        <topology evidence="4">Multi-pass membrane protein</topology>
    </subcellularLocation>
</comment>
<comment type="developmental stage">
    <text evidence="3">Increasingly expressed from early aggregation.</text>
</comment>
<comment type="similarity">
    <text evidence="4">In the N-terminal section; belongs to the BMP lipoprotein family.</text>
</comment>
<comment type="similarity">
    <text evidence="4">In the C-terminal section; belongs to the G-protein coupled receptor 3 family. GABA-B receptor subfamily.</text>
</comment>